<keyword id="KW-0963">Cytoplasm</keyword>
<keyword id="KW-0441">Lipid A biosynthesis</keyword>
<keyword id="KW-0444">Lipid biosynthesis</keyword>
<keyword id="KW-0443">Lipid metabolism</keyword>
<keyword id="KW-0456">Lyase</keyword>
<keyword id="KW-1185">Reference proteome</keyword>
<dbReference type="EC" id="4.2.1.59" evidence="1"/>
<dbReference type="EMBL" id="AE016853">
    <property type="protein sequence ID" value="AAO55065.1"/>
    <property type="molecule type" value="Genomic_DNA"/>
</dbReference>
<dbReference type="RefSeq" id="NP_791370.1">
    <property type="nucleotide sequence ID" value="NC_004578.1"/>
</dbReference>
<dbReference type="RefSeq" id="WP_003377815.1">
    <property type="nucleotide sequence ID" value="NC_004578.1"/>
</dbReference>
<dbReference type="SMR" id="Q886N2"/>
<dbReference type="STRING" id="223283.PSPTO_1545"/>
<dbReference type="GeneID" id="61791891"/>
<dbReference type="KEGG" id="pst:PSPTO_1545"/>
<dbReference type="PATRIC" id="fig|223283.9.peg.1571"/>
<dbReference type="eggNOG" id="COG0764">
    <property type="taxonomic scope" value="Bacteria"/>
</dbReference>
<dbReference type="HOGENOM" id="CLU_078912_1_2_6"/>
<dbReference type="OrthoDB" id="9772788at2"/>
<dbReference type="PhylomeDB" id="Q886N2"/>
<dbReference type="Proteomes" id="UP000002515">
    <property type="component" value="Chromosome"/>
</dbReference>
<dbReference type="GO" id="GO:0005737">
    <property type="term" value="C:cytoplasm"/>
    <property type="evidence" value="ECO:0007669"/>
    <property type="project" value="UniProtKB-SubCell"/>
</dbReference>
<dbReference type="GO" id="GO:0016020">
    <property type="term" value="C:membrane"/>
    <property type="evidence" value="ECO:0007669"/>
    <property type="project" value="GOC"/>
</dbReference>
<dbReference type="GO" id="GO:0019171">
    <property type="term" value="F:(3R)-hydroxyacyl-[acyl-carrier-protein] dehydratase activity"/>
    <property type="evidence" value="ECO:0007669"/>
    <property type="project" value="UniProtKB-EC"/>
</dbReference>
<dbReference type="GO" id="GO:0006633">
    <property type="term" value="P:fatty acid biosynthetic process"/>
    <property type="evidence" value="ECO:0007669"/>
    <property type="project" value="UniProtKB-UniRule"/>
</dbReference>
<dbReference type="GO" id="GO:0009245">
    <property type="term" value="P:lipid A biosynthetic process"/>
    <property type="evidence" value="ECO:0007669"/>
    <property type="project" value="UniProtKB-UniRule"/>
</dbReference>
<dbReference type="CDD" id="cd01288">
    <property type="entry name" value="FabZ"/>
    <property type="match status" value="1"/>
</dbReference>
<dbReference type="FunFam" id="3.10.129.10:FF:000001">
    <property type="entry name" value="3-hydroxyacyl-[acyl-carrier-protein] dehydratase FabZ"/>
    <property type="match status" value="1"/>
</dbReference>
<dbReference type="Gene3D" id="3.10.129.10">
    <property type="entry name" value="Hotdog Thioesterase"/>
    <property type="match status" value="1"/>
</dbReference>
<dbReference type="HAMAP" id="MF_00406">
    <property type="entry name" value="FabZ"/>
    <property type="match status" value="1"/>
</dbReference>
<dbReference type="InterPro" id="IPR013114">
    <property type="entry name" value="FabA_FabZ"/>
</dbReference>
<dbReference type="InterPro" id="IPR010084">
    <property type="entry name" value="FabZ"/>
</dbReference>
<dbReference type="InterPro" id="IPR029069">
    <property type="entry name" value="HotDog_dom_sf"/>
</dbReference>
<dbReference type="NCBIfam" id="TIGR01750">
    <property type="entry name" value="fabZ"/>
    <property type="match status" value="1"/>
</dbReference>
<dbReference type="NCBIfam" id="NF000582">
    <property type="entry name" value="PRK00006.1"/>
    <property type="match status" value="1"/>
</dbReference>
<dbReference type="PANTHER" id="PTHR30272">
    <property type="entry name" value="3-HYDROXYACYL-[ACYL-CARRIER-PROTEIN] DEHYDRATASE"/>
    <property type="match status" value="1"/>
</dbReference>
<dbReference type="PANTHER" id="PTHR30272:SF1">
    <property type="entry name" value="3-HYDROXYACYL-[ACYL-CARRIER-PROTEIN] DEHYDRATASE"/>
    <property type="match status" value="1"/>
</dbReference>
<dbReference type="Pfam" id="PF07977">
    <property type="entry name" value="FabA"/>
    <property type="match status" value="1"/>
</dbReference>
<dbReference type="SUPFAM" id="SSF54637">
    <property type="entry name" value="Thioesterase/thiol ester dehydrase-isomerase"/>
    <property type="match status" value="1"/>
</dbReference>
<organism>
    <name type="scientific">Pseudomonas syringae pv. tomato (strain ATCC BAA-871 / DC3000)</name>
    <dbReference type="NCBI Taxonomy" id="223283"/>
    <lineage>
        <taxon>Bacteria</taxon>
        <taxon>Pseudomonadati</taxon>
        <taxon>Pseudomonadota</taxon>
        <taxon>Gammaproteobacteria</taxon>
        <taxon>Pseudomonadales</taxon>
        <taxon>Pseudomonadaceae</taxon>
        <taxon>Pseudomonas</taxon>
    </lineage>
</organism>
<name>FABZ_PSESM</name>
<sequence>MMDINEIREYLPHRYPFLLVDRVTELDIENKNIRAYKNVSVNEPFFNGHFPQHPIMPGVLIIEAMAQAAGILAFKMLDSKPSDGTLYYFVGSDKLRFRQPVFPGDKLVLEATFLSSKRQIWKFECKATVDGKAVCSAEIICAERKL</sequence>
<accession>Q886N2</accession>
<reference key="1">
    <citation type="journal article" date="2003" name="Proc. Natl. Acad. Sci. U.S.A.">
        <title>The complete genome sequence of the Arabidopsis and tomato pathogen Pseudomonas syringae pv. tomato DC3000.</title>
        <authorList>
            <person name="Buell C.R."/>
            <person name="Joardar V."/>
            <person name="Lindeberg M."/>
            <person name="Selengut J."/>
            <person name="Paulsen I.T."/>
            <person name="Gwinn M.L."/>
            <person name="Dodson R.J."/>
            <person name="DeBoy R.T."/>
            <person name="Durkin A.S."/>
            <person name="Kolonay J.F."/>
            <person name="Madupu R."/>
            <person name="Daugherty S.C."/>
            <person name="Brinkac L.M."/>
            <person name="Beanan M.J."/>
            <person name="Haft D.H."/>
            <person name="Nelson W.C."/>
            <person name="Davidsen T.M."/>
            <person name="Zafar N."/>
            <person name="Zhou L."/>
            <person name="Liu J."/>
            <person name="Yuan Q."/>
            <person name="Khouri H.M."/>
            <person name="Fedorova N.B."/>
            <person name="Tran B."/>
            <person name="Russell D."/>
            <person name="Berry K.J."/>
            <person name="Utterback T.R."/>
            <person name="Van Aken S.E."/>
            <person name="Feldblyum T.V."/>
            <person name="D'Ascenzo M."/>
            <person name="Deng W.-L."/>
            <person name="Ramos A.R."/>
            <person name="Alfano J.R."/>
            <person name="Cartinhour S."/>
            <person name="Chatterjee A.K."/>
            <person name="Delaney T.P."/>
            <person name="Lazarowitz S.G."/>
            <person name="Martin G.B."/>
            <person name="Schneider D.J."/>
            <person name="Tang X."/>
            <person name="Bender C.L."/>
            <person name="White O."/>
            <person name="Fraser C.M."/>
            <person name="Collmer A."/>
        </authorList>
    </citation>
    <scope>NUCLEOTIDE SEQUENCE [LARGE SCALE GENOMIC DNA]</scope>
    <source>
        <strain>ATCC BAA-871 / DC3000</strain>
    </source>
</reference>
<comment type="function">
    <text evidence="1">Involved in unsaturated fatty acids biosynthesis. Catalyzes the dehydration of short chain beta-hydroxyacyl-ACPs and long chain saturated and unsaturated beta-hydroxyacyl-ACPs.</text>
</comment>
<comment type="catalytic activity">
    <reaction evidence="1">
        <text>a (3R)-hydroxyacyl-[ACP] = a (2E)-enoyl-[ACP] + H2O</text>
        <dbReference type="Rhea" id="RHEA:13097"/>
        <dbReference type="Rhea" id="RHEA-COMP:9925"/>
        <dbReference type="Rhea" id="RHEA-COMP:9945"/>
        <dbReference type="ChEBI" id="CHEBI:15377"/>
        <dbReference type="ChEBI" id="CHEBI:78784"/>
        <dbReference type="ChEBI" id="CHEBI:78827"/>
        <dbReference type="EC" id="4.2.1.59"/>
    </reaction>
</comment>
<comment type="subcellular location">
    <subcellularLocation>
        <location evidence="1">Cytoplasm</location>
    </subcellularLocation>
</comment>
<comment type="similarity">
    <text evidence="1">Belongs to the thioester dehydratase family. FabZ subfamily.</text>
</comment>
<gene>
    <name evidence="1" type="primary">fabZ</name>
    <name type="ordered locus">PSPTO_1545</name>
</gene>
<proteinExistence type="inferred from homology"/>
<protein>
    <recommendedName>
        <fullName evidence="1">3-hydroxyacyl-[acyl-carrier-protein] dehydratase FabZ</fullName>
        <ecNumber evidence="1">4.2.1.59</ecNumber>
    </recommendedName>
    <alternativeName>
        <fullName evidence="1">(3R)-hydroxymyristoyl-[acyl-carrier-protein] dehydratase</fullName>
        <shortName evidence="1">(3R)-hydroxymyristoyl-ACP dehydrase</shortName>
    </alternativeName>
    <alternativeName>
        <fullName evidence="1">Beta-hydroxyacyl-ACP dehydratase</fullName>
    </alternativeName>
</protein>
<feature type="chain" id="PRO_0000091715" description="3-hydroxyacyl-[acyl-carrier-protein] dehydratase FabZ">
    <location>
        <begin position="1"/>
        <end position="146"/>
    </location>
</feature>
<feature type="active site" evidence="1">
    <location>
        <position position="49"/>
    </location>
</feature>
<evidence type="ECO:0000255" key="1">
    <source>
        <dbReference type="HAMAP-Rule" id="MF_00406"/>
    </source>
</evidence>